<protein>
    <recommendedName>
        <fullName evidence="3">Omega-aminotransferase</fullName>
        <ecNumber evidence="2">2.6.1.-</ecNumber>
    </recommendedName>
    <alternativeName>
        <fullName evidence="5">Beta-alanine--pyruvate aminotransferase</fullName>
        <ecNumber evidence="2">2.6.1.18</ecNumber>
    </alternativeName>
</protein>
<evidence type="ECO:0000250" key="1">
    <source>
        <dbReference type="UniProtKB" id="Q9I700"/>
    </source>
</evidence>
<evidence type="ECO:0000269" key="2">
    <source>
    </source>
</evidence>
<evidence type="ECO:0000303" key="3">
    <source>
    </source>
</evidence>
<evidence type="ECO:0000305" key="4"/>
<evidence type="ECO:0000305" key="5">
    <source>
    </source>
</evidence>
<evidence type="ECO:0000312" key="6">
    <source>
        <dbReference type="EMBL" id="AAK25105.1"/>
    </source>
</evidence>
<keyword id="KW-0032">Aminotransferase</keyword>
<keyword id="KW-0663">Pyridoxal phosphate</keyword>
<keyword id="KW-0670">Pyruvate</keyword>
<keyword id="KW-1185">Reference proteome</keyword>
<keyword id="KW-0808">Transferase</keyword>
<gene>
    <name evidence="3" type="primary">aptA</name>
    <name evidence="6" type="ordered locus">CC_3143</name>
</gene>
<accession>Q9A3Q9</accession>
<proteinExistence type="evidence at protein level"/>
<feature type="chain" id="PRO_0000450757" description="Omega-aminotransferase">
    <location>
        <begin position="1"/>
        <end position="439"/>
    </location>
</feature>
<feature type="binding site" evidence="1">
    <location>
        <begin position="112"/>
        <end position="113"/>
    </location>
    <ligand>
        <name>pyridoxal 5'-phosphate</name>
        <dbReference type="ChEBI" id="CHEBI:597326"/>
    </ligand>
</feature>
<feature type="binding site" evidence="1">
    <location>
        <position position="318"/>
    </location>
    <ligand>
        <name>pyridoxal 5'-phosphate</name>
        <dbReference type="ChEBI" id="CHEBI:597326"/>
    </ligand>
</feature>
<feature type="modified residue" description="N6-(pyridoxal phosphate)lysine" evidence="5">
    <location>
        <position position="281"/>
    </location>
</feature>
<feature type="mutagenesis site" description="Decreases activity toward 3-aminobutanoate by 2-fold. Increases activity toward the aromatic beta-amino acid 3-amino-3-phenylpropanoate by 2-fold." evidence="2">
    <original>V</original>
    <variation>G</variation>
    <location>
        <position position="227"/>
    </location>
</feature>
<feature type="mutagenesis site" description="Decreases activity toward 3-aminobutanoate by 30-fold." evidence="2">
    <original>R</original>
    <variation>L</variation>
    <location>
        <position position="260"/>
    </location>
</feature>
<feature type="mutagenesis site" description="Decreases activity toward 3-aminobutanoate by 4-fold. Increases activity toward the aromatic beta-amino acid 3-amino-3-phenylpropanoate by 3-fold." evidence="2">
    <original>N</original>
    <variation>A</variation>
    <location>
        <position position="285"/>
    </location>
</feature>
<comment type="function">
    <text evidence="2 4">Aminotransferase that can use beta-amino acids, aliphatic amines, or aromatic amines as amino donors, and pyruvate as amino acceptor. Shows high activity for short-chain beta-amino acids, with the highest activity for 3-aminobutanoate and beta-alanine in vitro. Displays higher activity toward aromatic amines than aliphatic amines (PubMed:18239415). May be involved in beta-alanine biosynthesis and/or degradation (Probable).</text>
</comment>
<comment type="catalytic activity">
    <reaction evidence="2">
        <text>3-oxopropanoate + L-alanine = beta-alanine + pyruvate</text>
        <dbReference type="Rhea" id="RHEA:14077"/>
        <dbReference type="ChEBI" id="CHEBI:15361"/>
        <dbReference type="ChEBI" id="CHEBI:33190"/>
        <dbReference type="ChEBI" id="CHEBI:57966"/>
        <dbReference type="ChEBI" id="CHEBI:57972"/>
        <dbReference type="EC" id="2.6.1.18"/>
    </reaction>
</comment>
<comment type="catalytic activity">
    <reaction evidence="2">
        <text>3-aminobutanoate + pyruvate = acetoacetate + L-alanine</text>
        <dbReference type="Rhea" id="RHEA:64308"/>
        <dbReference type="ChEBI" id="CHEBI:13705"/>
        <dbReference type="ChEBI" id="CHEBI:15361"/>
        <dbReference type="ChEBI" id="CHEBI:57972"/>
        <dbReference type="ChEBI" id="CHEBI:150018"/>
    </reaction>
</comment>
<comment type="catalytic activity">
    <reaction evidence="2">
        <text>benzylamine + pyruvate = benzaldehyde + L-alanine</text>
        <dbReference type="Rhea" id="RHEA:64272"/>
        <dbReference type="ChEBI" id="CHEBI:15361"/>
        <dbReference type="ChEBI" id="CHEBI:17169"/>
        <dbReference type="ChEBI" id="CHEBI:57972"/>
        <dbReference type="ChEBI" id="CHEBI:225238"/>
    </reaction>
</comment>
<comment type="catalytic activity">
    <reaction evidence="2">
        <text>(S)-1-phenylethylamine + pyruvate = acetophenone + L-alanine</text>
        <dbReference type="Rhea" id="RHEA:64280"/>
        <dbReference type="ChEBI" id="CHEBI:15361"/>
        <dbReference type="ChEBI" id="CHEBI:27632"/>
        <dbReference type="ChEBI" id="CHEBI:57972"/>
        <dbReference type="ChEBI" id="CHEBI:141108"/>
    </reaction>
</comment>
<comment type="catalytic activity">
    <reaction evidence="2">
        <text>2-phenylethylamine + pyruvate = 2-phenylacetaldehyde + L-alanine</text>
        <dbReference type="Rhea" id="RHEA:64284"/>
        <dbReference type="ChEBI" id="CHEBI:15361"/>
        <dbReference type="ChEBI" id="CHEBI:16424"/>
        <dbReference type="ChEBI" id="CHEBI:57972"/>
        <dbReference type="ChEBI" id="CHEBI:225237"/>
    </reaction>
</comment>
<comment type="catalytic activity">
    <reaction evidence="2">
        <text>1-phenylpropylamine + pyruvate = 1-phenylpropan-1-one + L-alanine</text>
        <dbReference type="Rhea" id="RHEA:64304"/>
        <dbReference type="ChEBI" id="CHEBI:15361"/>
        <dbReference type="ChEBI" id="CHEBI:57972"/>
        <dbReference type="ChEBI" id="CHEBI:150015"/>
        <dbReference type="ChEBI" id="CHEBI:425902"/>
    </reaction>
</comment>
<comment type="catalytic activity">
    <reaction evidence="2">
        <text>3-phenylpropylamine + pyruvate = 3-phenylpropanal + L-alanine</text>
        <dbReference type="Rhea" id="RHEA:64300"/>
        <dbReference type="ChEBI" id="CHEBI:15361"/>
        <dbReference type="ChEBI" id="CHEBI:39940"/>
        <dbReference type="ChEBI" id="CHEBI:57972"/>
        <dbReference type="ChEBI" id="CHEBI:150861"/>
    </reaction>
</comment>
<comment type="cofactor">
    <cofactor evidence="2">
        <name>pyridoxal 5'-phosphate</name>
        <dbReference type="ChEBI" id="CHEBI:597326"/>
    </cofactor>
</comment>
<comment type="biophysicochemical properties">
    <phDependence>
        <text evidence="2">Optimum pH is 8.5.</text>
    </phDependence>
    <temperatureDependence>
        <text evidence="2">Optimum temperature is 50 degrees Celsius.</text>
    </temperatureDependence>
</comment>
<comment type="subunit">
    <text evidence="1">Homotetramer.</text>
</comment>
<comment type="similarity">
    <text evidence="4">Belongs to the class-III pyridoxal-phosphate-dependent aminotransferase family.</text>
</comment>
<name>APTA_CAUVC</name>
<reference key="1">
    <citation type="journal article" date="2001" name="Proc. Natl. Acad. Sci. U.S.A.">
        <title>Complete genome sequence of Caulobacter crescentus.</title>
        <authorList>
            <person name="Nierman W.C."/>
            <person name="Feldblyum T.V."/>
            <person name="Laub M.T."/>
            <person name="Paulsen I.T."/>
            <person name="Nelson K.E."/>
            <person name="Eisen J.A."/>
            <person name="Heidelberg J.F."/>
            <person name="Alley M.R.K."/>
            <person name="Ohta N."/>
            <person name="Maddock J.R."/>
            <person name="Potocka I."/>
            <person name="Nelson W.C."/>
            <person name="Newton A."/>
            <person name="Stephens C."/>
            <person name="Phadke N.D."/>
            <person name="Ely B."/>
            <person name="DeBoy R.T."/>
            <person name="Dodson R.J."/>
            <person name="Durkin A.S."/>
            <person name="Gwinn M.L."/>
            <person name="Haft D.H."/>
            <person name="Kolonay J.F."/>
            <person name="Smit J."/>
            <person name="Craven M.B."/>
            <person name="Khouri H.M."/>
            <person name="Shetty J."/>
            <person name="Berry K.J."/>
            <person name="Utterback T.R."/>
            <person name="Tran K."/>
            <person name="Wolf A.M."/>
            <person name="Vamathevan J.J."/>
            <person name="Ermolaeva M.D."/>
            <person name="White O."/>
            <person name="Salzberg S.L."/>
            <person name="Venter J.C."/>
            <person name="Shapiro L."/>
            <person name="Fraser C.M."/>
        </authorList>
    </citation>
    <scope>NUCLEOTIDE SEQUENCE [LARGE SCALE GENOMIC DNA]</scope>
    <source>
        <strain>ATCC 19089 / CIP 103742 / CB 15</strain>
    </source>
</reference>
<reference key="2">
    <citation type="journal article" date="2008" name="J. Microbiol. Biotechnol.">
        <title>Identification of omega-aminotransferase from Caulobacter crescentus and site-directed mutagenesis to broaden substrate specificity.</title>
        <authorList>
            <person name="Hwang B.Y."/>
            <person name="Ko S.H."/>
            <person name="Park H.Y."/>
            <person name="Seo J.H."/>
            <person name="Lee B.S."/>
            <person name="Kim B.G."/>
        </authorList>
    </citation>
    <scope>FUNCTION</scope>
    <scope>CATALYTIC ACTIVITY</scope>
    <scope>SUBSTRATE SPECIFICITY</scope>
    <scope>COFACTOR</scope>
    <scope>BIOPHYSICOCHEMICAL PROPERTIES</scope>
    <scope>3D-STRUCTURE MODELING</scope>
    <scope>MUTAGENESIS OF VAL-227; ARG-260 AND ASN-285</scope>
    <source>
        <strain>ATCC 19089 / CIP 103742 / CB 15</strain>
    </source>
</reference>
<organism>
    <name type="scientific">Caulobacter vibrioides (strain ATCC 19089 / CIP 103742 / CB 15)</name>
    <name type="common">Caulobacter crescentus</name>
    <dbReference type="NCBI Taxonomy" id="190650"/>
    <lineage>
        <taxon>Bacteria</taxon>
        <taxon>Pseudomonadati</taxon>
        <taxon>Pseudomonadota</taxon>
        <taxon>Alphaproteobacteria</taxon>
        <taxon>Caulobacterales</taxon>
        <taxon>Caulobacteraceae</taxon>
        <taxon>Caulobacter</taxon>
    </lineage>
</organism>
<dbReference type="EC" id="2.6.1.-" evidence="2"/>
<dbReference type="EC" id="2.6.1.18" evidence="2"/>
<dbReference type="EMBL" id="AE005673">
    <property type="protein sequence ID" value="AAK25105.1"/>
    <property type="molecule type" value="Genomic_DNA"/>
</dbReference>
<dbReference type="PIR" id="E87638">
    <property type="entry name" value="E87638"/>
</dbReference>
<dbReference type="RefSeq" id="NP_421937.1">
    <property type="nucleotide sequence ID" value="NC_002696.2"/>
</dbReference>
<dbReference type="SMR" id="Q9A3Q9"/>
<dbReference type="STRING" id="190650.CC_3143"/>
<dbReference type="EnsemblBacteria" id="AAK25105">
    <property type="protein sequence ID" value="AAK25105"/>
    <property type="gene ID" value="CC_3143"/>
</dbReference>
<dbReference type="KEGG" id="ccr:CC_3143"/>
<dbReference type="PATRIC" id="fig|190650.5.peg.3153"/>
<dbReference type="eggNOG" id="COG0161">
    <property type="taxonomic scope" value="Bacteria"/>
</dbReference>
<dbReference type="HOGENOM" id="CLU_016922_4_3_5"/>
<dbReference type="BioCyc" id="CAULO:CC3143-MONOMER"/>
<dbReference type="Proteomes" id="UP000001816">
    <property type="component" value="Chromosome"/>
</dbReference>
<dbReference type="GO" id="GO:0004015">
    <property type="term" value="F:adenosylmethionine-8-amino-7-oxononanoate transaminase activity"/>
    <property type="evidence" value="ECO:0007669"/>
    <property type="project" value="TreeGrafter"/>
</dbReference>
<dbReference type="GO" id="GO:0016223">
    <property type="term" value="F:beta-alanine:pyruvate transaminase activity"/>
    <property type="evidence" value="ECO:0007669"/>
    <property type="project" value="UniProtKB-EC"/>
</dbReference>
<dbReference type="GO" id="GO:0030170">
    <property type="term" value="F:pyridoxal phosphate binding"/>
    <property type="evidence" value="ECO:0007669"/>
    <property type="project" value="InterPro"/>
</dbReference>
<dbReference type="GO" id="GO:0009102">
    <property type="term" value="P:biotin biosynthetic process"/>
    <property type="evidence" value="ECO:0007669"/>
    <property type="project" value="TreeGrafter"/>
</dbReference>
<dbReference type="CDD" id="cd00610">
    <property type="entry name" value="OAT_like"/>
    <property type="match status" value="1"/>
</dbReference>
<dbReference type="FunFam" id="3.40.640.10:FF:000014">
    <property type="entry name" value="Adenosylmethionine-8-amino-7-oxononanoate aminotransferase, probable"/>
    <property type="match status" value="1"/>
</dbReference>
<dbReference type="Gene3D" id="3.90.1150.10">
    <property type="entry name" value="Aspartate Aminotransferase, domain 1"/>
    <property type="match status" value="1"/>
</dbReference>
<dbReference type="Gene3D" id="3.40.640.10">
    <property type="entry name" value="Type I PLP-dependent aspartate aminotransferase-like (Major domain)"/>
    <property type="match status" value="1"/>
</dbReference>
<dbReference type="InterPro" id="IPR005814">
    <property type="entry name" value="Aminotrans_3"/>
</dbReference>
<dbReference type="InterPro" id="IPR049704">
    <property type="entry name" value="Aminotrans_3_PPA_site"/>
</dbReference>
<dbReference type="InterPro" id="IPR015424">
    <property type="entry name" value="PyrdxlP-dep_Trfase"/>
</dbReference>
<dbReference type="InterPro" id="IPR015421">
    <property type="entry name" value="PyrdxlP-dep_Trfase_major"/>
</dbReference>
<dbReference type="InterPro" id="IPR015422">
    <property type="entry name" value="PyrdxlP-dep_Trfase_small"/>
</dbReference>
<dbReference type="PANTHER" id="PTHR42684">
    <property type="entry name" value="ADENOSYLMETHIONINE-8-AMINO-7-OXONONANOATE AMINOTRANSFERASE"/>
    <property type="match status" value="1"/>
</dbReference>
<dbReference type="PANTHER" id="PTHR42684:SF1">
    <property type="entry name" value="BETA-ALANINE--PYRUVATE AMINOTRANSFERASE"/>
    <property type="match status" value="1"/>
</dbReference>
<dbReference type="Pfam" id="PF00202">
    <property type="entry name" value="Aminotran_3"/>
    <property type="match status" value="1"/>
</dbReference>
<dbReference type="PIRSF" id="PIRSF000521">
    <property type="entry name" value="Transaminase_4ab_Lys_Orn"/>
    <property type="match status" value="1"/>
</dbReference>
<dbReference type="SUPFAM" id="SSF53383">
    <property type="entry name" value="PLP-dependent transferases"/>
    <property type="match status" value="1"/>
</dbReference>
<dbReference type="PROSITE" id="PS00600">
    <property type="entry name" value="AA_TRANSFER_CLASS_3"/>
    <property type="match status" value="1"/>
</dbReference>
<sequence length="439" mass="47629">MPDFGANDLDAFWMPFTPNRRFKRHPRMLSSASGMWYRTPESREVLDATSGLWCVNAGHDRPKIREAIQKQAAEMDYAPCFNMGHPLAFQFASRLAQITPKGLDRIFFTNSGSESVDTALKIALAYHRARGKGTKTRLIGRERGYHGVGFGGISVGGIPKNRMYFGSLLTGVDHLPHTHGLPGNTCAKGQPENGAHLADDLERIVALHDASNIAAVIVEPVAGSTGVLIPPKGYLERLRAICDKHDILLIFDEVITGFGRVGAPFAAERFGVTPDLICMAKGLTNAAVPCGAVAASGKIYDAMMDGADAPIELFHGYTYSAHPLACAAGLATLETYREDDLFARAAGLEGYWQDAMHSLADARHVVDVRNLGLVAGIELEPRPGAPTARAMEVFETCFDEGLLIRVTGDIIALSPPLILEKDHIDRMVETIRRVLGQVD</sequence>